<comment type="catalytic activity">
    <reaction>
        <text>Milk clotting activity, broad specificity, but fails to cleave 15-Leu-|-Tyr-16 or 16-Tyr-|-Leu-17 of insulin B chain.</text>
        <dbReference type="EC" id="3.4.23.29"/>
    </reaction>
</comment>
<comment type="similarity">
    <text evidence="3">Belongs to the peptidase A1 family.</text>
</comment>
<reference key="1">
    <citation type="journal article" date="1989" name="Agric. Biol. Chem.">
        <title>Cloning and sequence analysis of cDNA for Irpex lacteus aspartic proteinase.</title>
        <authorList>
            <person name="Kobayashi H."/>
            <person name="Sekibata S."/>
            <person name="Shibuya H."/>
            <person name="Yoshida S."/>
            <person name="Kusakabe I."/>
            <person name="Murakami K."/>
        </authorList>
    </citation>
    <scope>NUCLEOTIDE SEQUENCE [MRNA]</scope>
    <scope>PROTEIN SEQUENCE OF 1-24</scope>
</reference>
<feature type="chain" id="PRO_0000199512" description="Polyporopepsin">
    <location>
        <begin position="1"/>
        <end position="340"/>
    </location>
</feature>
<feature type="domain" description="Peptidase A1" evidence="2">
    <location>
        <begin position="14"/>
        <end position="330"/>
    </location>
</feature>
<feature type="active site">
    <location>
        <position position="32"/>
    </location>
</feature>
<feature type="active site">
    <location>
        <position position="212"/>
    </location>
</feature>
<feature type="glycosylation site" description="N-linked (GlcNAc...) asparagine" evidence="1">
    <location>
        <position position="192"/>
    </location>
</feature>
<feature type="glycosylation site" description="N-linked (GlcNAc...) asparagine" evidence="1">
    <location>
        <position position="238"/>
    </location>
</feature>
<feature type="strand" evidence="4">
    <location>
        <begin position="3"/>
        <end position="9"/>
    </location>
</feature>
<feature type="strand" evidence="4">
    <location>
        <begin position="14"/>
        <end position="20"/>
    </location>
</feature>
<feature type="turn" evidence="4">
    <location>
        <begin position="21"/>
        <end position="24"/>
    </location>
</feature>
<feature type="strand" evidence="4">
    <location>
        <begin position="25"/>
        <end position="32"/>
    </location>
</feature>
<feature type="strand" evidence="4">
    <location>
        <begin position="42"/>
        <end position="44"/>
    </location>
</feature>
<feature type="strand" evidence="4">
    <location>
        <begin position="53"/>
        <end position="62"/>
    </location>
</feature>
<feature type="strand" evidence="4">
    <location>
        <begin position="67"/>
        <end position="79"/>
    </location>
</feature>
<feature type="strand" evidence="4">
    <location>
        <begin position="82"/>
        <end position="97"/>
    </location>
</feature>
<feature type="strand" evidence="4">
    <location>
        <begin position="102"/>
        <end position="106"/>
    </location>
</feature>
<feature type="helix" evidence="4">
    <location>
        <begin position="110"/>
        <end position="113"/>
    </location>
</feature>
<feature type="strand" evidence="4">
    <location>
        <begin position="116"/>
        <end position="119"/>
    </location>
</feature>
<feature type="helix" evidence="4">
    <location>
        <begin position="128"/>
        <end position="134"/>
    </location>
</feature>
<feature type="strand" evidence="4">
    <location>
        <begin position="137"/>
        <end position="146"/>
    </location>
</feature>
<feature type="strand" evidence="4">
    <location>
        <begin position="151"/>
        <end position="164"/>
    </location>
</feature>
<feature type="helix" evidence="4">
    <location>
        <begin position="167"/>
        <end position="169"/>
    </location>
</feature>
<feature type="strand" evidence="4">
    <location>
        <begin position="175"/>
        <end position="178"/>
    </location>
</feature>
<feature type="helix" evidence="4">
    <location>
        <begin position="185"/>
        <end position="187"/>
    </location>
</feature>
<feature type="strand" evidence="4">
    <location>
        <begin position="188"/>
        <end position="197"/>
    </location>
</feature>
<feature type="turn" evidence="4">
    <location>
        <begin position="198"/>
        <end position="200"/>
    </location>
</feature>
<feature type="strand" evidence="4">
    <location>
        <begin position="201"/>
        <end position="211"/>
    </location>
</feature>
<feature type="strand" evidence="4">
    <location>
        <begin position="217"/>
        <end position="220"/>
    </location>
</feature>
<feature type="helix" evidence="4">
    <location>
        <begin position="222"/>
        <end position="232"/>
    </location>
</feature>
<feature type="turn" evidence="4">
    <location>
        <begin position="238"/>
        <end position="240"/>
    </location>
</feature>
<feature type="strand" evidence="4">
    <location>
        <begin position="241"/>
        <end position="245"/>
    </location>
</feature>
<feature type="helix" evidence="4">
    <location>
        <begin position="247"/>
        <end position="251"/>
    </location>
</feature>
<feature type="strand" evidence="4">
    <location>
        <begin position="256"/>
        <end position="260"/>
    </location>
</feature>
<feature type="strand" evidence="4">
    <location>
        <begin position="263"/>
        <end position="267"/>
    </location>
</feature>
<feature type="helix" evidence="4">
    <location>
        <begin position="270"/>
        <end position="272"/>
    </location>
</feature>
<feature type="helix" evidence="4">
    <location>
        <begin position="276"/>
        <end position="282"/>
    </location>
</feature>
<feature type="strand" evidence="4">
    <location>
        <begin position="289"/>
        <end position="291"/>
    </location>
</feature>
<feature type="strand" evidence="4">
    <location>
        <begin position="293"/>
        <end position="295"/>
    </location>
</feature>
<feature type="strand" evidence="4">
    <location>
        <begin position="306"/>
        <end position="308"/>
    </location>
</feature>
<feature type="helix" evidence="4">
    <location>
        <begin position="310"/>
        <end position="313"/>
    </location>
</feature>
<feature type="strand" evidence="4">
    <location>
        <begin position="315"/>
        <end position="321"/>
    </location>
</feature>
<feature type="turn" evidence="4">
    <location>
        <begin position="322"/>
        <end position="325"/>
    </location>
</feature>
<feature type="strand" evidence="4">
    <location>
        <begin position="326"/>
        <end position="331"/>
    </location>
</feature>
<feature type="turn" evidence="4">
    <location>
        <begin position="333"/>
        <end position="336"/>
    </location>
</feature>
<protein>
    <recommendedName>
        <fullName>Polyporopepsin</fullName>
        <ecNumber>3.4.23.29</ecNumber>
    </recommendedName>
    <alternativeName>
        <fullName>Aspartic proteinase</fullName>
    </alternativeName>
</protein>
<proteinExistence type="evidence at protein level"/>
<organism>
    <name type="scientific">Irpex lacteus</name>
    <name type="common">Milk-white toothed polypore</name>
    <name type="synonym">Polyporus tulipiferae</name>
    <dbReference type="NCBI Taxonomy" id="5319"/>
    <lineage>
        <taxon>Eukaryota</taxon>
        <taxon>Fungi</taxon>
        <taxon>Dikarya</taxon>
        <taxon>Basidiomycota</taxon>
        <taxon>Agaricomycotina</taxon>
        <taxon>Agaricomycetes</taxon>
        <taxon>Polyporales</taxon>
        <taxon>Irpicaceae</taxon>
        <taxon>Irpex</taxon>
    </lineage>
</organism>
<name>CARP_IRPLA</name>
<sequence>AAGSVPATNQLVDYVVNVGVGSPATTYSLLVDTGSSNTWLGADKSYVKTSTSSATSDKVSVTYGSGSFSGTEYTDTVTLGSLTIPKQSIGVASRDSGFDGVDGILGVGPVDLTVGTLSPHTSTSIPTVTDNLFSQGTIPTNLLAVSFEPTTSESSTNGELTFGATDSSKYTGSITYTPITSTSPASAYWGINQTIRYGSSTSILSSTAGIVDTGTTLTLIASDAFAKYKKATGAVADNNTGLLRLTTAQYANLQSLFFTIGGQTFELTANAQIWPRNLNTAIGGSASSVYLIVGDLGSDSGEGLDFINGLTFLERFYSVYDTTNKRLGLATTSFTTATSN</sequence>
<keyword id="KW-0002">3D-structure</keyword>
<keyword id="KW-0064">Aspartyl protease</keyword>
<keyword id="KW-0903">Direct protein sequencing</keyword>
<keyword id="KW-0325">Glycoprotein</keyword>
<keyword id="KW-0378">Hydrolase</keyword>
<keyword id="KW-0645">Protease</keyword>
<evidence type="ECO:0000255" key="1"/>
<evidence type="ECO:0000255" key="2">
    <source>
        <dbReference type="PROSITE-ProRule" id="PRU01103"/>
    </source>
</evidence>
<evidence type="ECO:0000305" key="3"/>
<evidence type="ECO:0007829" key="4">
    <source>
        <dbReference type="PDB" id="1WKR"/>
    </source>
</evidence>
<dbReference type="EC" id="3.4.23.29"/>
<dbReference type="EMBL" id="D00589">
    <property type="protein sequence ID" value="BAA00467.1"/>
    <property type="molecule type" value="mRNA"/>
</dbReference>
<dbReference type="PIR" id="JU0057">
    <property type="entry name" value="PEIKL"/>
</dbReference>
<dbReference type="PDB" id="1WKR">
    <property type="method" value="X-ray"/>
    <property type="resolution" value="1.30 A"/>
    <property type="chains" value="A=1-340"/>
</dbReference>
<dbReference type="PDBsum" id="1WKR"/>
<dbReference type="SMR" id="P17576"/>
<dbReference type="MEROPS" id="A01.019"/>
<dbReference type="EvolutionaryTrace" id="P17576"/>
<dbReference type="GO" id="GO:0004190">
    <property type="term" value="F:aspartic-type endopeptidase activity"/>
    <property type="evidence" value="ECO:0007669"/>
    <property type="project" value="UniProtKB-KW"/>
</dbReference>
<dbReference type="GO" id="GO:0006508">
    <property type="term" value="P:proteolysis"/>
    <property type="evidence" value="ECO:0007669"/>
    <property type="project" value="UniProtKB-KW"/>
</dbReference>
<dbReference type="CDD" id="cd05471">
    <property type="entry name" value="pepsin_like"/>
    <property type="match status" value="1"/>
</dbReference>
<dbReference type="Gene3D" id="2.40.70.10">
    <property type="entry name" value="Acid Proteases"/>
    <property type="match status" value="2"/>
</dbReference>
<dbReference type="InterPro" id="IPR001461">
    <property type="entry name" value="Aspartic_peptidase_A1"/>
</dbReference>
<dbReference type="InterPro" id="IPR001969">
    <property type="entry name" value="Aspartic_peptidase_AS"/>
</dbReference>
<dbReference type="InterPro" id="IPR034164">
    <property type="entry name" value="Pepsin-like_dom"/>
</dbReference>
<dbReference type="InterPro" id="IPR033121">
    <property type="entry name" value="PEPTIDASE_A1"/>
</dbReference>
<dbReference type="InterPro" id="IPR021109">
    <property type="entry name" value="Peptidase_aspartic_dom_sf"/>
</dbReference>
<dbReference type="PANTHER" id="PTHR47966">
    <property type="entry name" value="BETA-SITE APP-CLEAVING ENZYME, ISOFORM A-RELATED"/>
    <property type="match status" value="1"/>
</dbReference>
<dbReference type="PANTHER" id="PTHR47966:SF51">
    <property type="entry name" value="BETA-SITE APP-CLEAVING ENZYME, ISOFORM A-RELATED"/>
    <property type="match status" value="1"/>
</dbReference>
<dbReference type="Pfam" id="PF00026">
    <property type="entry name" value="Asp"/>
    <property type="match status" value="1"/>
</dbReference>
<dbReference type="PRINTS" id="PR00792">
    <property type="entry name" value="PEPSIN"/>
</dbReference>
<dbReference type="SUPFAM" id="SSF50630">
    <property type="entry name" value="Acid proteases"/>
    <property type="match status" value="1"/>
</dbReference>
<dbReference type="PROSITE" id="PS00141">
    <property type="entry name" value="ASP_PROTEASE"/>
    <property type="match status" value="2"/>
</dbReference>
<dbReference type="PROSITE" id="PS51767">
    <property type="entry name" value="PEPTIDASE_A1"/>
    <property type="match status" value="1"/>
</dbReference>
<accession>P17576</accession>